<organism>
    <name type="scientific">Methanosarcina barkeri (strain Fusaro / DSM 804)</name>
    <dbReference type="NCBI Taxonomy" id="269797"/>
    <lineage>
        <taxon>Archaea</taxon>
        <taxon>Methanobacteriati</taxon>
        <taxon>Methanobacteriota</taxon>
        <taxon>Stenosarchaea group</taxon>
        <taxon>Methanomicrobia</taxon>
        <taxon>Methanosarcinales</taxon>
        <taxon>Methanosarcinaceae</taxon>
        <taxon>Methanosarcina</taxon>
    </lineage>
</organism>
<gene>
    <name evidence="1" type="primary">top6A</name>
    <name type="ordered locus">Mbar_A2806</name>
</gene>
<dbReference type="EC" id="5.6.2.2" evidence="1"/>
<dbReference type="EMBL" id="CP000099">
    <property type="protein sequence ID" value="AAZ71706.1"/>
    <property type="molecule type" value="Genomic_DNA"/>
</dbReference>
<dbReference type="SMR" id="Q468I6"/>
<dbReference type="STRING" id="269797.Mbar_A2806"/>
<dbReference type="PaxDb" id="269797-Mbar_A2806"/>
<dbReference type="KEGG" id="mba:Mbar_A2806"/>
<dbReference type="eggNOG" id="arCOG04143">
    <property type="taxonomic scope" value="Archaea"/>
</dbReference>
<dbReference type="HOGENOM" id="CLU_037229_1_0_2"/>
<dbReference type="OrthoDB" id="5866at2157"/>
<dbReference type="GO" id="GO:0005694">
    <property type="term" value="C:chromosome"/>
    <property type="evidence" value="ECO:0007669"/>
    <property type="project" value="InterPro"/>
</dbReference>
<dbReference type="GO" id="GO:0005524">
    <property type="term" value="F:ATP binding"/>
    <property type="evidence" value="ECO:0007669"/>
    <property type="project" value="UniProtKB-KW"/>
</dbReference>
<dbReference type="GO" id="GO:0003677">
    <property type="term" value="F:DNA binding"/>
    <property type="evidence" value="ECO:0007669"/>
    <property type="project" value="UniProtKB-UniRule"/>
</dbReference>
<dbReference type="GO" id="GO:0003918">
    <property type="term" value="F:DNA topoisomerase type II (double strand cut, ATP-hydrolyzing) activity"/>
    <property type="evidence" value="ECO:0007669"/>
    <property type="project" value="UniProtKB-UniRule"/>
</dbReference>
<dbReference type="GO" id="GO:0000287">
    <property type="term" value="F:magnesium ion binding"/>
    <property type="evidence" value="ECO:0007669"/>
    <property type="project" value="UniProtKB-UniRule"/>
</dbReference>
<dbReference type="GO" id="GO:0006265">
    <property type="term" value="P:DNA topological change"/>
    <property type="evidence" value="ECO:0007669"/>
    <property type="project" value="UniProtKB-UniRule"/>
</dbReference>
<dbReference type="CDD" id="cd00223">
    <property type="entry name" value="TOPRIM_TopoIIB_SPO"/>
    <property type="match status" value="1"/>
</dbReference>
<dbReference type="FunFam" id="1.10.10.10:FF:000655">
    <property type="entry name" value="Type 2 DNA topoisomerase 6 subunit A"/>
    <property type="match status" value="1"/>
</dbReference>
<dbReference type="FunFam" id="3.40.1360.10:FF:000011">
    <property type="entry name" value="Type 2 DNA topoisomerase 6 subunit A"/>
    <property type="match status" value="1"/>
</dbReference>
<dbReference type="Gene3D" id="3.40.1360.10">
    <property type="match status" value="1"/>
</dbReference>
<dbReference type="Gene3D" id="1.10.10.10">
    <property type="entry name" value="Winged helix-like DNA-binding domain superfamily/Winged helix DNA-binding domain"/>
    <property type="match status" value="1"/>
</dbReference>
<dbReference type="HAMAP" id="MF_00132">
    <property type="entry name" value="Top6A"/>
    <property type="match status" value="1"/>
</dbReference>
<dbReference type="InterPro" id="IPR002815">
    <property type="entry name" value="Spo11/TopoVI_A"/>
</dbReference>
<dbReference type="InterPro" id="IPR013049">
    <property type="entry name" value="Spo11/TopoVI_A_N"/>
</dbReference>
<dbReference type="InterPro" id="IPR036078">
    <property type="entry name" value="Spo11/TopoVI_A_sf"/>
</dbReference>
<dbReference type="InterPro" id="IPR049333">
    <property type="entry name" value="Topo_VI_alpha"/>
</dbReference>
<dbReference type="InterPro" id="IPR004085">
    <property type="entry name" value="TopoVI_A"/>
</dbReference>
<dbReference type="InterPro" id="IPR034136">
    <property type="entry name" value="TOPRIM_Topo6A/Spo11"/>
</dbReference>
<dbReference type="InterPro" id="IPR036388">
    <property type="entry name" value="WH-like_DNA-bd_sf"/>
</dbReference>
<dbReference type="NCBIfam" id="NF003332">
    <property type="entry name" value="PRK04342.1-1"/>
    <property type="match status" value="1"/>
</dbReference>
<dbReference type="PANTHER" id="PTHR10848">
    <property type="entry name" value="MEIOTIC RECOMBINATION PROTEIN SPO11"/>
    <property type="match status" value="1"/>
</dbReference>
<dbReference type="PANTHER" id="PTHR10848:SF0">
    <property type="entry name" value="MEIOTIC RECOMBINATION PROTEIN SPO11"/>
    <property type="match status" value="1"/>
</dbReference>
<dbReference type="Pfam" id="PF21180">
    <property type="entry name" value="TOP6A-Spo11_Toprim"/>
    <property type="match status" value="1"/>
</dbReference>
<dbReference type="Pfam" id="PF20768">
    <property type="entry name" value="Topo_VI_alpha"/>
    <property type="match status" value="1"/>
</dbReference>
<dbReference type="Pfam" id="PF04406">
    <property type="entry name" value="TP6A_N"/>
    <property type="match status" value="1"/>
</dbReference>
<dbReference type="PRINTS" id="PR01550">
    <property type="entry name" value="TOP6AFAMILY"/>
</dbReference>
<dbReference type="PRINTS" id="PR01552">
    <property type="entry name" value="TPISMRASE6A"/>
</dbReference>
<dbReference type="SUPFAM" id="SSF56726">
    <property type="entry name" value="DNA topoisomerase IV, alpha subunit"/>
    <property type="match status" value="1"/>
</dbReference>
<dbReference type="PROSITE" id="PS52041">
    <property type="entry name" value="TOPO_IIB"/>
    <property type="match status" value="1"/>
</dbReference>
<reference key="1">
    <citation type="journal article" date="2006" name="J. Bacteriol.">
        <title>The Methanosarcina barkeri genome: comparative analysis with Methanosarcina acetivorans and Methanosarcina mazei reveals extensive rearrangement within methanosarcinal genomes.</title>
        <authorList>
            <person name="Maeder D.L."/>
            <person name="Anderson I."/>
            <person name="Brettin T.S."/>
            <person name="Bruce D.C."/>
            <person name="Gilna P."/>
            <person name="Han C.S."/>
            <person name="Lapidus A."/>
            <person name="Metcalf W.W."/>
            <person name="Saunders E."/>
            <person name="Tapia R."/>
            <person name="Sowers K.R."/>
        </authorList>
    </citation>
    <scope>NUCLEOTIDE SEQUENCE [LARGE SCALE GENOMIC DNA]</scope>
    <source>
        <strain>Fusaro / DSM 804</strain>
    </source>
</reference>
<keyword id="KW-0067">ATP-binding</keyword>
<keyword id="KW-0238">DNA-binding</keyword>
<keyword id="KW-0413">Isomerase</keyword>
<keyword id="KW-0460">Magnesium</keyword>
<keyword id="KW-0479">Metal-binding</keyword>
<keyword id="KW-0547">Nucleotide-binding</keyword>
<keyword id="KW-0799">Topoisomerase</keyword>
<feature type="chain" id="PRO_1000018315" description="Type 2 DNA topoisomerase 6 subunit A">
    <location>
        <begin position="1"/>
        <end position="369"/>
    </location>
</feature>
<feature type="domain" description="Topo IIA-type catalytic" evidence="2">
    <location>
        <begin position="11"/>
        <end position="149"/>
    </location>
</feature>
<feature type="active site" description="O-(5'-phospho-DNA)-tyrosine intermediate" evidence="2">
    <location>
        <position position="106"/>
    </location>
</feature>
<feature type="binding site" evidence="1">
    <location>
        <position position="202"/>
    </location>
    <ligand>
        <name>Mg(2+)</name>
        <dbReference type="ChEBI" id="CHEBI:18420"/>
    </ligand>
</feature>
<feature type="binding site" evidence="1">
    <location>
        <position position="254"/>
    </location>
    <ligand>
        <name>Mg(2+)</name>
        <dbReference type="ChEBI" id="CHEBI:18420"/>
    </ligand>
</feature>
<sequence length="369" mass="42204">MARKISNKKTQRDLLAREKLFELAEKIYNQFENEVVPSISLPSRTKSNLEYSNESDVWVYGGRESERSAKTVKGAFQLLKTTYATEFLINEHLAQSRGSTLRELYYISEGWEAAKFKEQAESDRLIEDLELLTNLQREYFHMRPEEDGATMFGPIEITEQTNRGERNIHCQKDVGEGGYQIPFNVENIEFKAHDASMIIAIETGGMYARLMENGFDEAYNAILVHLKGQPARSTRRIIKRMNEELGIPVAVFTDGDPWSYRIYASVAYGAIKSAHLSEFMATPAAKFLGLQPSDIVEYELSTDKLTEQDINALRSELSDPRFESDYWKEQIQLQLDIGKKAEQQAFAGKGLNFVTEVYLPNRLKEMGML</sequence>
<comment type="function">
    <text evidence="1">Relaxes both positive and negative superturns and exhibits a strong decatenase activity.</text>
</comment>
<comment type="catalytic activity">
    <reaction evidence="1">
        <text>ATP-dependent breakage, passage and rejoining of double-stranded DNA.</text>
        <dbReference type="EC" id="5.6.2.2"/>
    </reaction>
</comment>
<comment type="cofactor">
    <cofactor evidence="1">
        <name>Mg(2+)</name>
        <dbReference type="ChEBI" id="CHEBI:18420"/>
    </cofactor>
</comment>
<comment type="subunit">
    <text evidence="1">Homodimer. Heterotetramer of two Top6A and two Top6B chains.</text>
</comment>
<comment type="similarity">
    <text evidence="1">Belongs to the TOP6A family.</text>
</comment>
<name>TOP6A_METBF</name>
<protein>
    <recommendedName>
        <fullName evidence="1">Type 2 DNA topoisomerase 6 subunit A</fullName>
        <ecNumber evidence="1">5.6.2.2</ecNumber>
    </recommendedName>
    <alternativeName>
        <fullName evidence="1">Type II DNA topoisomerase VI subunit A</fullName>
    </alternativeName>
</protein>
<evidence type="ECO:0000255" key="1">
    <source>
        <dbReference type="HAMAP-Rule" id="MF_00132"/>
    </source>
</evidence>
<evidence type="ECO:0000255" key="2">
    <source>
        <dbReference type="PROSITE-ProRule" id="PRU01385"/>
    </source>
</evidence>
<proteinExistence type="inferred from homology"/>
<accession>Q468I6</accession>